<keyword id="KW-0007">Acetylation</keyword>
<keyword id="KW-0025">Alternative splicing</keyword>
<keyword id="KW-0965">Cell junction</keyword>
<keyword id="KW-1003">Cell membrane</keyword>
<keyword id="KW-0966">Cell projection</keyword>
<keyword id="KW-0168">Coated pit</keyword>
<keyword id="KW-0963">Cytoplasm</keyword>
<keyword id="KW-0968">Cytoplasmic vesicle</keyword>
<keyword id="KW-0206">Cytoskeleton</keyword>
<keyword id="KW-0254">Endocytosis</keyword>
<keyword id="KW-0967">Endosome</keyword>
<keyword id="KW-0342">GTP-binding</keyword>
<keyword id="KW-0378">Hydrolase</keyword>
<keyword id="KW-0472">Membrane</keyword>
<keyword id="KW-0493">Microtubule</keyword>
<keyword id="KW-0505">Motor protein</keyword>
<keyword id="KW-0547">Nucleotide-binding</keyword>
<keyword id="KW-0581">Phagocytosis</keyword>
<keyword id="KW-0597">Phosphoprotein</keyword>
<keyword id="KW-1185">Reference proteome</keyword>
<keyword id="KW-0770">Synapse</keyword>
<keyword id="KW-0771">Synaptosome</keyword>
<sequence length="870" mass="98230">MGNRGMEELIPLVNKLQDAFSSIGQSCHLDLPQIAVVGGQSAGKSSVLENFVGRDFLPRGSGIVTRRPLILQLIFSKTEYAEFLHCKSKKFTDFDEVRQEIEAETDRVTGTNKGISPVPINLRVYSPHVLNLTLIDLPGITKVPVGDQPPDIEYQIKDMILQFISRESSLILAVTPANMDLANSDALKLAKEVDPQGLRTIGVITKLDLMDEGTDARDVLENKLLPLRRGYIGVVNRSQKDIEGRKDIRAALAAERKFFLSHPAYRHMADRMGTPHLQKTLNQQLTNHIRESLPTLRSKLQSQLLSLEKEVEEYKNFRPDDPTRKTKALLQMVQQFGVDFEKRIEGSGDQVDTLELSGGARINRIFHERFPFELVKMEFDEKDLRREISYAIKNIHGVRTGLFTPDLAFEAIVKKQVVKLKEPCLKCVDLVIQELISTVRQCTSKLSSYPRLREETERIVTTYIREREGRTKDQILLLIDIEQSYINTNHEDFIGFANAQQRSTQLNKKRAIPNQGEILVIRRGWLTINNISLMKGGSKEYWFVLTAESLSWYKDEEEKEKKYMLPLDNLKIRDVEKGFMSNKHVFAIFNTEQRNVYKDLRQIELACDSQEDVDSWKASFLRAGVYPEKDQAENEDGAQENTFSMDPQLERQVETIRNLVDSYVAIINKSIRDLMPKTIMHLMINNTKAFIHHELLAYLYSSADQSSLMEESAEQAQRRDDMLRMYHALKEALNIIGDISTSTVSTPVPPPVDDTWLQNTSSHSPTPQRRPVSSVHPPGRPPAVRGPTPGPPLIPMPVGATSSFSAPPIPSRPGPQNVFANNDPFSAPPQIPSRPARIPPGIPPGVPSRRAPAAPSRPTIIRPAEPSLLD</sequence>
<feature type="chain" id="PRO_0000206572" description="Dynamin-2">
    <location>
        <begin position="1"/>
        <end position="870"/>
    </location>
</feature>
<feature type="domain" description="Dynamin-type G" evidence="6">
    <location>
        <begin position="28"/>
        <end position="294"/>
    </location>
</feature>
<feature type="domain" description="PH" evidence="4">
    <location>
        <begin position="519"/>
        <end position="625"/>
    </location>
</feature>
<feature type="domain" description="GED" evidence="5">
    <location>
        <begin position="653"/>
        <end position="744"/>
    </location>
</feature>
<feature type="region of interest" description="G1 motif" evidence="6">
    <location>
        <begin position="38"/>
        <end position="45"/>
    </location>
</feature>
<feature type="region of interest" description="G2 motif" evidence="6">
    <location>
        <begin position="64"/>
        <end position="66"/>
    </location>
</feature>
<feature type="region of interest" description="G3 motif" evidence="6">
    <location>
        <begin position="136"/>
        <end position="139"/>
    </location>
</feature>
<feature type="region of interest" description="G4 motif" evidence="6">
    <location>
        <begin position="205"/>
        <end position="208"/>
    </location>
</feature>
<feature type="region of interest" description="G5 motif" evidence="6">
    <location>
        <begin position="235"/>
        <end position="238"/>
    </location>
</feature>
<feature type="region of interest" description="Disordered" evidence="7">
    <location>
        <begin position="741"/>
        <end position="870"/>
    </location>
</feature>
<feature type="compositionally biased region" description="Polar residues" evidence="7">
    <location>
        <begin position="756"/>
        <end position="767"/>
    </location>
</feature>
<feature type="compositionally biased region" description="Pro residues" evidence="7">
    <location>
        <begin position="826"/>
        <end position="846"/>
    </location>
</feature>
<feature type="compositionally biased region" description="Low complexity" evidence="7">
    <location>
        <begin position="847"/>
        <end position="864"/>
    </location>
</feature>
<feature type="binding site" evidence="3">
    <location>
        <position position="41"/>
    </location>
    <ligand>
        <name>GDP</name>
        <dbReference type="ChEBI" id="CHEBI:58189"/>
    </ligand>
</feature>
<feature type="binding site" evidence="3">
    <location>
        <position position="43"/>
    </location>
    <ligand>
        <name>GDP</name>
        <dbReference type="ChEBI" id="CHEBI:58189"/>
    </ligand>
</feature>
<feature type="binding site" evidence="3">
    <location>
        <position position="44"/>
    </location>
    <ligand>
        <name>GDP</name>
        <dbReference type="ChEBI" id="CHEBI:58189"/>
    </ligand>
</feature>
<feature type="binding site" evidence="3">
    <location>
        <position position="45"/>
    </location>
    <ligand>
        <name>GDP</name>
        <dbReference type="ChEBI" id="CHEBI:58189"/>
    </ligand>
</feature>
<feature type="binding site" evidence="3">
    <location>
        <position position="46"/>
    </location>
    <ligand>
        <name>GDP</name>
        <dbReference type="ChEBI" id="CHEBI:58189"/>
    </ligand>
</feature>
<feature type="binding site" evidence="3">
    <location>
        <position position="59"/>
    </location>
    <ligand>
        <name>GDP</name>
        <dbReference type="ChEBI" id="CHEBI:58189"/>
    </ligand>
</feature>
<feature type="binding site" evidence="3">
    <location>
        <position position="60"/>
    </location>
    <ligand>
        <name>GDP</name>
        <dbReference type="ChEBI" id="CHEBI:58189"/>
    </ligand>
</feature>
<feature type="binding site" evidence="3">
    <location>
        <position position="206"/>
    </location>
    <ligand>
        <name>GDP</name>
        <dbReference type="ChEBI" id="CHEBI:58189"/>
    </ligand>
</feature>
<feature type="binding site" evidence="3">
    <location>
        <position position="208"/>
    </location>
    <ligand>
        <name>GDP</name>
        <dbReference type="ChEBI" id="CHEBI:58189"/>
    </ligand>
</feature>
<feature type="binding site" evidence="3">
    <location>
        <position position="211"/>
    </location>
    <ligand>
        <name>GDP</name>
        <dbReference type="ChEBI" id="CHEBI:58189"/>
    </ligand>
</feature>
<feature type="binding site" evidence="3">
    <location>
        <position position="236"/>
    </location>
    <ligand>
        <name>GDP</name>
        <dbReference type="ChEBI" id="CHEBI:58189"/>
    </ligand>
</feature>
<feature type="binding site" evidence="3">
    <location>
        <position position="237"/>
    </location>
    <ligand>
        <name>GDP</name>
        <dbReference type="ChEBI" id="CHEBI:58189"/>
    </ligand>
</feature>
<feature type="binding site" evidence="3">
    <location>
        <position position="239"/>
    </location>
    <ligand>
        <name>GDP</name>
        <dbReference type="ChEBI" id="CHEBI:58189"/>
    </ligand>
</feature>
<feature type="modified residue" description="Phosphotyrosine" evidence="23">
    <location>
        <position position="231"/>
    </location>
</feature>
<feature type="modified residue" description="N6-acetyllysine" evidence="1">
    <location>
        <position position="299"/>
    </location>
</feature>
<feature type="modified residue" description="Phosphotyrosine" evidence="23">
    <location>
        <position position="597"/>
    </location>
</feature>
<feature type="modified residue" description="N6-acetyllysine" evidence="2">
    <location>
        <position position="598"/>
    </location>
</feature>
<feature type="modified residue" description="Phosphothreonine" evidence="2">
    <location>
        <position position="755"/>
    </location>
</feature>
<feature type="modified residue" description="Phosphoserine; by CDK1" evidence="15">
    <location>
        <position position="764"/>
    </location>
</feature>
<feature type="splice variant" id="VSP_001327" description="In isoform 2 and isoform 4." evidence="21">
    <original>LAFEAIVKKQVVKLKEPCLKCVDLVIQELISTVRQCTS</original>
    <variation>MAFEAIVKKQLVKLKEPSLKCVDLVVSELATVIKKCAE</variation>
    <location>
        <begin position="407"/>
        <end position="444"/>
    </location>
</feature>
<feature type="splice variant" id="VSP_001328" description="In isoform 3 and isoform 4." evidence="20 21">
    <location>
        <begin position="516"/>
        <end position="519"/>
    </location>
</feature>
<feature type="mutagenesis site" description="Strongly reduced phosphorylation. Decreases receptor-mediated endocytosis." evidence="14">
    <original>Y</original>
    <variation>F</variation>
    <location>
        <position position="231"/>
    </location>
</feature>
<feature type="mutagenesis site" description="Does not Affect stimulation of GTPase activity by CTTN." evidence="13">
    <original>R</original>
    <variation>A</variation>
    <location>
        <position position="399"/>
    </location>
</feature>
<feature type="mutagenesis site" description="Does not affect organization of the actin cytoskeleton." evidence="17">
    <location>
        <begin position="555"/>
        <end position="557"/>
    </location>
</feature>
<feature type="mutagenesis site" description="Decreases about 50% the stress fiber density. Significantly decreases GTPase activity. Impairs membrane bound-stimulated GTPase activity. Decreases membrane tubulation decorated with spiral polymers. Retains self-assembly into rings. Does not affect bundle actin filaments. Reduces the association between membranes during actin bundles." evidence="17">
    <original>K</original>
    <variation>E</variation>
    <location>
        <position position="562"/>
    </location>
</feature>
<feature type="mutagenesis site" description="Strongly reduced phosphorylation. Decreases receptor-mediated endocytosis." evidence="14">
    <original>Y</original>
    <variation>F</variation>
    <location>
        <position position="597"/>
    </location>
</feature>
<feature type="mutagenesis site" description="Reduces proline-rich domain phosphorylation by 80%." evidence="15">
    <original>S</original>
    <variation>A</variation>
    <location>
        <position position="764"/>
    </location>
</feature>
<feature type="mutagenesis site" description="Abolishes midbody localization and shows increased multinucleation." evidence="15">
    <original>S</original>
    <variation>E</variation>
    <location>
        <position position="764"/>
    </location>
</feature>
<feature type="sequence conflict" description="In Ref. 2; AAA16746." evidence="22" ref="2">
    <original>S</original>
    <variation>T</variation>
    <location>
        <position position="298"/>
    </location>
</feature>
<feature type="sequence conflict" description="In Ref. 2; AAA16746." evidence="22" ref="2">
    <original>S</original>
    <variation>T</variation>
    <location>
        <position position="389"/>
    </location>
</feature>
<feature type="sequence conflict" description="In Ref. 2; AAA16746." evidence="22" ref="2">
    <original>N</original>
    <variation>K</variation>
    <location>
        <position position="487"/>
    </location>
</feature>
<feature type="sequence conflict" description="In Ref. 2; AAA16746." evidence="22" ref="2">
    <original>G</original>
    <variation>E</variation>
    <location>
        <position position="637"/>
    </location>
</feature>
<feature type="sequence conflict" description="In Ref. 2; AAA16746." evidence="22" ref="2">
    <location>
        <position position="719"/>
    </location>
</feature>
<feature type="sequence conflict" description="In Ref. 2; AAA16746." evidence="22" ref="2">
    <original>GPTPGP</original>
    <variation>PHTGA</variation>
    <location>
        <begin position="786"/>
        <end position="791"/>
    </location>
</feature>
<reference key="1">
    <citation type="journal article" date="1994" name="J. Biol. Chem.">
        <title>Differential expression and regulation of multiple dynamins.</title>
        <authorList>
            <person name="Sontag J.-M."/>
            <person name="Fykse E.M."/>
            <person name="Ushkaryov Y."/>
            <person name="Liu J.-P."/>
            <person name="Robinson P.J."/>
            <person name="Suedhof T.C."/>
        </authorList>
    </citation>
    <scope>NUCLEOTIDE SEQUENCE [MRNA] (ISOFORMS 1; 2; 3 AND 4)</scope>
    <source>
        <tissue>Brain</tissue>
    </source>
</reference>
<reference key="2">
    <citation type="journal article" date="1994" name="Proc. Natl. Acad. Sci. U.S.A.">
        <title>Identification of dynamin 2, an isoform ubiquitously expressed in rat tissues.</title>
        <authorList>
            <person name="Cook T.A."/>
            <person name="Urrutia R."/>
            <person name="McNiven M.A."/>
        </authorList>
    </citation>
    <scope>NUCLEOTIDE SEQUENCE [MRNA] (ISOFORM 3)</scope>
    <source>
        <strain>Sprague-Dawley</strain>
    </source>
</reference>
<reference key="3">
    <citation type="journal article" date="1998" name="Mol. Biol. Cell">
        <title>Differential distribution of dynamin isoforms in mammalian cells.</title>
        <authorList>
            <person name="Cao H."/>
            <person name="Garcia F."/>
            <person name="McNiven M.A."/>
        </authorList>
    </citation>
    <scope>ALTERNATIVE SPLICING</scope>
    <scope>SUBCELLULAR LOCATION</scope>
    <scope>TISSUE SPECIFICITY</scope>
</reference>
<reference key="4">
    <citation type="journal article" date="1998" name="Science">
        <title>Role of dynamin in the formation of transport vesicles from the trans-Golgi network.</title>
        <authorList>
            <person name="Jones S.M."/>
            <person name="Howell K.E."/>
            <person name="Henley J.R."/>
            <person name="Cao H."/>
            <person name="McNiven M.A."/>
        </authorList>
    </citation>
    <scope>FUNCTION</scope>
    <scope>SUBCELLULAR LOCATION</scope>
</reference>
<reference key="5">
    <citation type="journal article" date="2001" name="J. Biol. Chem.">
        <title>Dynamin isoform-specific interaction with the shank/ProSAP scaffolding proteins of the postsynaptic density and actin cytoskeleton.</title>
        <authorList>
            <person name="Okamoto P.M."/>
            <person name="Gamby C."/>
            <person name="Wells D."/>
            <person name="Fallon J."/>
            <person name="Vallee R.B."/>
        </authorList>
    </citation>
    <scope>SUBCELLULAR LOCATION</scope>
</reference>
<reference key="6">
    <citation type="journal article" date="2004" name="Nat. Cell Biol.">
        <title>Dynamin 2 binds gamma-tubulin and participates in centrosome cohesion.</title>
        <authorList>
            <person name="Thompson H.M."/>
            <person name="Cao H."/>
            <person name="Chen J."/>
            <person name="Euteneuer U."/>
            <person name="McNiven M.A."/>
        </authorList>
    </citation>
    <scope>FUNCTION</scope>
    <scope>INTERACTION WITH TUBG1</scope>
    <scope>SUBCELLULAR LOCATION</scope>
</reference>
<reference key="7">
    <citation type="journal article" date="2005" name="Cell">
        <title>TTP specifically regulates the internalization of the transferrin receptor.</title>
        <authorList>
            <person name="Tosoni D."/>
            <person name="Puri C."/>
            <person name="Confalonieri S."/>
            <person name="Salcini A.E."/>
            <person name="De Camilli P."/>
            <person name="Tacchetti C."/>
            <person name="Di Fiore P.P."/>
        </authorList>
    </citation>
    <scope>INTERACTION WITH SH3BP4</scope>
    <scope>FUNCTION</scope>
    <scope>CATALYTIC ACTIVITY</scope>
    <scope>PHOSPHORYLATION</scope>
</reference>
<reference key="8">
    <citation type="journal article" date="2005" name="J. Cell Sci.">
        <title>NOSTRIN functions as a homotrimeric adaptor protein facilitating internalization of eNOS.</title>
        <authorList>
            <person name="Icking A."/>
            <person name="Matt S."/>
            <person name="Opitz N."/>
            <person name="Wiesenthal A."/>
            <person name="Mueller-Esterl W."/>
            <person name="Schilling K."/>
        </authorList>
    </citation>
    <scope>INTERACTION WITH NOSTRIN</scope>
</reference>
<reference key="9">
    <citation type="journal article" date="2007" name="FEBS Lett.">
        <title>Myosin 1E interacts with synaptojanin-1 and dynamin and is involved in endocytosis.</title>
        <authorList>
            <person name="Krendel M."/>
            <person name="Osterweil E.K."/>
            <person name="Mooseker M.S."/>
        </authorList>
    </citation>
    <scope>INTERACTION WITH MYO1E</scope>
</reference>
<reference key="10">
    <citation type="journal article" date="2009" name="J. Biol. Chem.">
        <title>Dynamin2 GTPase and cortactin remodel actin filaments.</title>
        <authorList>
            <person name="Mooren O.L."/>
            <person name="Kotova T.I."/>
            <person name="Moore A.J."/>
            <person name="Schafer D.A."/>
        </authorList>
    </citation>
    <scope>FUNCTION</scope>
    <scope>CATALYTIC ACTIVITY</scope>
    <scope>INTERACTION WITH CTTN</scope>
    <scope>MUTAGENESIS OF ARG-399</scope>
</reference>
<reference key="11">
    <citation type="journal article" date="2010" name="Mol. Cell. Biol.">
        <title>SRC-mediated phosphorylation of dynamin and cortactin regulates the 'constitutive' endocytosis of transferrin.</title>
        <authorList>
            <person name="Cao H."/>
            <person name="Chen J."/>
            <person name="Krueger E.W."/>
            <person name="McNiven M.A."/>
        </authorList>
    </citation>
    <scope>FUNCTION</scope>
    <scope>SUBCELLULAR LOCATION</scope>
    <scope>PHOSPHORYLATION AT TYR-231 AND TYR-597</scope>
    <scope>MUTAGENESIS OF TYR-231 AND TYR-597</scope>
    <scope>INTERACTION WITH CTTN</scope>
</reference>
<reference key="12">
    <citation type="journal article" date="2011" name="Biochim. Biophys. Acta">
        <title>Phosphorylation of dynamin II at serine-764 is associated with cytokinesis.</title>
        <authorList>
            <person name="Chircop M."/>
            <person name="Sarcevic B."/>
            <person name="Larsen M.R."/>
            <person name="Malladi C.S."/>
            <person name="Chau N."/>
            <person name="Zavortink M."/>
            <person name="Smith C.M."/>
            <person name="Quan A."/>
            <person name="Anggono V."/>
            <person name="Hains P.G."/>
            <person name="Graham M.E."/>
            <person name="Robinson P.J."/>
        </authorList>
    </citation>
    <scope>PHOSPHORYLATION AT SER-764 BY CDK1</scope>
    <scope>MUTAGENESIS OF SER-764</scope>
    <scope>FUNCTION</scope>
    <scope>SUBCELLULAR LOCATION</scope>
    <source>
        <tissue>Lung</tissue>
    </source>
</reference>
<reference key="13">
    <citation type="journal article" date="2011" name="J. Neurochem.">
        <title>Growth cone morphology and spreading are regulated by a dynamin-cortactin complex at point contacts in hippocampal neurons.</title>
        <authorList>
            <person name="Kurklinsky S."/>
            <person name="Chen J."/>
            <person name="McNiven M.A."/>
        </authorList>
    </citation>
    <scope>FUNCTION</scope>
    <scope>SUBCELLULAR LOCATION</scope>
    <scope>INTERACTION WITH CTTN AND ACTN1</scope>
</reference>
<reference key="14">
    <citation type="journal article" date="2022" name="Front. Cell Dev. Biol.">
        <title>The Lipid-Binding Defective Dynamin 2 Mutant in Charcot-Marie-Tooth Disease Impairs Proper Actin Bundling and Actin Organization in Glomerular Podocytes.</title>
        <authorList>
            <person name="Hamasaki E."/>
            <person name="Wakita N."/>
            <person name="Yasuoka H."/>
            <person name="Nagaoka H."/>
            <person name="Morita M."/>
            <person name="Takashima E."/>
            <person name="Uchihashi T."/>
            <person name="Takeda T."/>
            <person name="Abe T."/>
            <person name="Lee J.W."/>
            <person name="Iimura T."/>
            <person name="Saleem M.A."/>
            <person name="Ogo N."/>
            <person name="Asai A."/>
            <person name="Narita A."/>
            <person name="Takei K."/>
            <person name="Yamada H."/>
        </authorList>
    </citation>
    <scope>FUNCTION</scope>
    <scope>CATALYTIC ACTIVITY</scope>
    <scope>SUBCELLULAR LOCATION</scope>
    <scope>MUTAGENESIS OF 555-ASP--GLU-557 AND LYS-562</scope>
</reference>
<organism>
    <name type="scientific">Rattus norvegicus</name>
    <name type="common">Rat</name>
    <dbReference type="NCBI Taxonomy" id="10116"/>
    <lineage>
        <taxon>Eukaryota</taxon>
        <taxon>Metazoa</taxon>
        <taxon>Chordata</taxon>
        <taxon>Craniata</taxon>
        <taxon>Vertebrata</taxon>
        <taxon>Euteleostomi</taxon>
        <taxon>Mammalia</taxon>
        <taxon>Eutheria</taxon>
        <taxon>Euarchontoglires</taxon>
        <taxon>Glires</taxon>
        <taxon>Rodentia</taxon>
        <taxon>Myomorpha</taxon>
        <taxon>Muroidea</taxon>
        <taxon>Muridae</taxon>
        <taxon>Murinae</taxon>
        <taxon>Rattus</taxon>
    </lineage>
</organism>
<name>DYN2_RAT</name>
<proteinExistence type="evidence at protein level"/>
<comment type="function">
    <text evidence="1 2 9 13 14 15 16 17 18">Catalyzes the hydrolysis of GTP and utilizes this energy to mediate vesicle scission at plasma membrane during endocytosis and filament remodeling at many actin structures during organization of the actin cytoskeleton (PubMed:19605363, PubMed:19995918, PubMed:35620056). Plays an important role in vesicular trafficking processes, namely clathrin-mediated endocytosis (CME), exocytic and clathrin-coated vesicle from the trans-Golgi network, and PDGF stimulated macropinocytosis (PubMed:19995918, PubMed:21195118, PubMed:9438853). During vesicular trafficking process, associates to the membrane, through lipid binding, and self-assembles into ring-like structure through oligomerization to form a helical polymer around the vesicle membrane and leading to vesicle scission (PubMed:35620056). Plays a role in organization of the actin cytoskeleton by mediating arrangement of stress fibers and actin bundles in podocytes (PubMed:35620056). During organization of the actin cytoskeleton, self-assembles into ring-like structure that directly bundles actin filaments to form typical membrane tubules decorated with dynamin spiral polymers (PubMed:35620056). Self-assembly increases GTPase activity and the GTP hydrolysis causes the rapid depolymerization of dynamin spiral polymers, and results in dispersion of actin bundles (PubMed:35620056). Remodels, through its interaction with CTTN, bundled actin filaments in a GTPase-dependent manner and plays a role in orchestrating the global actomyosin cytoskeleton (PubMed:19605363). The interaction with CTTN stabilizes the interaction of DNM2 and actin filaments and stimulates the intrinsic GTPase activity that results in actin filament-barbed ends and increases the sensitivity of filaments in bundles to the actin depolymerizing factor, CFL1 (PubMed:19605363). Plays a role in the autophagy process, by participating in the formation of ATG9A vesicles destined for the autophagosomes through its interaction with SNX18, by mediating recycling endosome scission leading to autophagosome release through MAP1LC3B interaction and by regulating maturation of apoptotic cell corpse-containing phagosomes by recruiting PIK3C3 to the phagosome membrane (By similarity). Also plays a role in cytokinesis (PubMed:21195118). May participate in centrosome cohesion through its interaction with TUBG1 (PubMed:15048127). Plays a role in the regulation of neuron morphology, axon growth and formation of neuronal growth cones (PubMed:21210813). Involved in membrane tubulation (By similarity).</text>
</comment>
<comment type="catalytic activity">
    <reaction evidence="13 17">
        <text>GTP + H2O = GDP + phosphate + H(+)</text>
        <dbReference type="Rhea" id="RHEA:19669"/>
        <dbReference type="ChEBI" id="CHEBI:15377"/>
        <dbReference type="ChEBI" id="CHEBI:15378"/>
        <dbReference type="ChEBI" id="CHEBI:37565"/>
        <dbReference type="ChEBI" id="CHEBI:43474"/>
        <dbReference type="ChEBI" id="CHEBI:58189"/>
        <dbReference type="EC" id="3.6.5.5"/>
    </reaction>
    <physiologicalReaction direction="left-to-right" evidence="13 17">
        <dbReference type="Rhea" id="RHEA:19670"/>
    </physiologicalReaction>
</comment>
<comment type="subunit">
    <text evidence="1 2 9 10 11 12 13 14 16 17">Oligomerizes into a helical polymer that self-assembles around the vesicle membrane, when associated to the menbrane through lipid binding (PubMed:35620056). Interacts with SHANK1 and SHANK2. Interacts with SNX9. Interacts (via C-terminal proline-rich domain (PRD)) with SNX18 (via SH3 domain); this interaction regulates ATG9A and ATG16L1 trafficking from recycling endosomes to sites of autophagosome formation. Interacts with SNX33 (via SH3 domain). Interacts with PSTPIP1 (via SH3 domain). Interacts with CTNND2. Interacts (via C-terminal proline-rich domain (PRD)) with BIN1 (via SH3 domain); this interaction allows the recruitment of DNM2 to the membrane tubules and inhibits self-assembly-stimulated GTPase activity on the membrane. Interacts with GABARAP, GABARAPL1 and GABARAPL2. Interacts with MAP1LC3B (the lipidate and non-lipidated LC3 form); this interaction mediates recycling endosome scission leading to autophagosome release. Interacts with ITSN1 (By similarity). Interacts with MYOF. May interact with PIK3C3. May be a component of a complex composed of RAB5A (in GDP-bound form), DYN2 and PIK3C3. Interacts with SDC4; this interaction is markedly enhanced at focal ahesion site upon induction of focal adhesions and stress-fiber formation (By similarity). Interacts with ACTN1 (PubMed:21210813). Interacts with CTTN; this interaction stimulates the intrinsic GTPase activity of DNM2 and stabilizes the association of DNM2 and actin filaments; in addition this interaction is stimulated by ligand binding to the receptor, leading to the recruitment of the DNM2-CTTN complex to the sequestered receptor-ligand complex to its internalization (PubMed:19605363, PubMed:19995918, PubMed:21210813). Interacts with NOSTRIN (via SH3 domain); this interaction allows the recruitment of NOS3 to dynamin-positive structures (PubMed:16234328). Interacts (via C-terminal proline-rich domain (PRD)) with SH3BP4 (via SH3 domain); this interaction controls the GTPase activity and is prevented by EGFR-induced tyrosine phosphorylation of either DNM2 or SH3BP4 (PubMed:16325581). Interacts with MYO1E (via SH3 domain) (PubMed:17257598). Interacts with TUBG1; this interaction may participate in centrosome cohesion (PubMed:15048127).</text>
</comment>
<comment type="interaction">
    <interactant intactId="EBI-349613">
        <id>P39052</id>
    </interactant>
    <interactant intactId="EBI-80080">
        <id>O08838</id>
        <label>Amph</label>
    </interactant>
    <organismsDiffer>false</organismsDiffer>
    <experiments>2</experiments>
</comment>
<comment type="interaction">
    <interactant intactId="EBI-349613">
        <id>P39052</id>
    </interactant>
    <interactant intactId="EBI-80909">
        <id>Q9WV48</id>
        <label>Shank1</label>
    </interactant>
    <organismsDiffer>false</organismsDiffer>
    <experiments>2</experiments>
</comment>
<comment type="interaction">
    <interactant intactId="EBI-349613">
        <id>P39052</id>
    </interactant>
    <interactant intactId="EBI-1049513">
        <id>Q9P0V3</id>
        <label>SH3BP4</label>
    </interactant>
    <organismsDiffer>true</organismsDiffer>
    <experiments>5</experiments>
</comment>
<comment type="interaction">
    <interactant intactId="EBI-349613">
        <id>P39052</id>
    </interactant>
    <interactant intactId="EBI-346595">
        <id>Q96B97</id>
        <label>SH3KBP1</label>
    </interactant>
    <organismsDiffer>true</organismsDiffer>
    <experiments>4</experiments>
</comment>
<comment type="interaction">
    <interactant intactId="EBI-349613">
        <id>P39052</id>
    </interactant>
    <interactant intactId="EBI-433642">
        <id>Q9BX66</id>
        <label>SORBS1</label>
    </interactant>
    <organismsDiffer>true</organismsDiffer>
    <experiments>5</experiments>
</comment>
<comment type="subcellular location">
    <subcellularLocation>
        <location evidence="16">Cytoplasm</location>
        <location evidence="16">Cytoskeleton</location>
    </subcellularLocation>
    <subcellularLocation>
        <location evidence="18">Cytoplasmic vesicle</location>
        <location evidence="18">Clathrin-coated vesicle</location>
    </subcellularLocation>
    <subcellularLocation>
        <location evidence="2">Cell projection</location>
        <location evidence="2">Uropodium</location>
    </subcellularLocation>
    <subcellularLocation>
        <location evidence="2">Endosome</location>
    </subcellularLocation>
    <subcellularLocation>
        <location evidence="9">Cytoplasm</location>
        <location evidence="9">Cytoskeleton</location>
        <location evidence="9">Microtubule organizing center</location>
        <location evidence="9">Centrosome</location>
    </subcellularLocation>
    <subcellularLocation>
        <location evidence="2">Cytoplasm</location>
        <location evidence="2">Cytoskeleton</location>
        <location evidence="2">Microtubule organizing center</location>
        <location evidence="2">Centrosome</location>
        <location evidence="2">Centriole</location>
    </subcellularLocation>
    <subcellularLocation>
        <location evidence="2">Recycling endosome</location>
    </subcellularLocation>
    <subcellularLocation>
        <location evidence="1">Cell projection</location>
        <location evidence="1">Phagocytic cup</location>
    </subcellularLocation>
    <subcellularLocation>
        <location evidence="1">Cytoplasmic vesicle</location>
        <location evidence="1">Phagosome membrane</location>
        <topology evidence="1">Peripheral membrane protein</topology>
    </subcellularLocation>
    <subcellularLocation>
        <location evidence="1">Cell projection</location>
        <location evidence="1">Podosome</location>
    </subcellularLocation>
    <subcellularLocation>
        <location evidence="16">Cytoplasm</location>
    </subcellularLocation>
    <subcellularLocation>
        <location evidence="16">Cell junction</location>
    </subcellularLocation>
    <subcellularLocation>
        <location evidence="8">Postsynaptic density</location>
    </subcellularLocation>
    <subcellularLocation>
        <location evidence="8">Synapse</location>
        <location evidence="8">Synaptosome</location>
    </subcellularLocation>
    <subcellularLocation>
        <location evidence="15 19">Midbody</location>
    </subcellularLocation>
    <subcellularLocation>
        <location evidence="14">Membrane</location>
        <location evidence="14">Clathrin-coated pit</location>
    </subcellularLocation>
    <text evidence="1 2 9 18">Localized in recycling endosomes fragment to release nascent autophagosomes (By similarity). Co-localizes with PIK3C3 and RAB5A to the nascent phagosome. Localized at focal ahesion site upon induction of focal adhesions and stress-fiber formation, when interacts with SDC4 (By similarity). Exists as a dynamic component of the centrosome (PubMed:15048127). Associates with clathrin-coated vesicles at both the plasma membrane and the trans-Golgi network (TGN) (PubMed:9438853).</text>
</comment>
<comment type="subcellular location">
    <molecule>Isoform 2</molecule>
    <subcellularLocation>
        <location evidence="19">Cytoplasmic vesicle</location>
        <location evidence="19">Clathrin-coated vesicle</location>
    </subcellularLocation>
    <subcellularLocation>
        <location evidence="19">Membrane</location>
        <location evidence="19">Clathrin-coated pit</location>
    </subcellularLocation>
    <text evidence="19">Sequestered to clathrin-coated pits and vesicles at the plasma membrane and the Golgi apparatus.</text>
</comment>
<comment type="subcellular location">
    <molecule>Isoform 4</molecule>
    <subcellularLocation>
        <location evidence="19">Cell membrane</location>
    </subcellularLocation>
    <text evidence="19">Localized to numerous punctate spots on the plasma membrane.</text>
</comment>
<comment type="alternative products">
    <event type="alternative splicing"/>
    <isoform>
        <id>P39052-1</id>
        <name>1</name>
        <name>ba</name>
        <name>IIBA</name>
        <sequence type="displayed"/>
    </isoform>
    <isoform>
        <id>P39052-2</id>
        <name>2</name>
        <name>aa</name>
        <sequence type="described" ref="VSP_001327"/>
    </isoform>
    <isoform>
        <id>P39052-3</id>
        <name>3</name>
        <name>bb</name>
        <name>IIC</name>
        <sequence type="described" ref="VSP_001328"/>
    </isoform>
    <isoform>
        <id>P39052-4</id>
        <name>4</name>
        <name>ab</name>
        <sequence type="described" ref="VSP_001327 VSP_001328"/>
    </isoform>
</comment>
<comment type="tissue specificity">
    <text evidence="19">Ubiquitously expressed. Brain expression is restricted to glial cells and fibroblasts. Highest levels in the testis.</text>
</comment>
<comment type="PTM">
    <text evidence="1 2 14 15">Phosphorylation at Ser-848 by GSK3-alpha relieves the inhibition of BIN1 and promotes endocytosis (By similarity). Phosphorylation at Ser-764 by CDK1 is greatly increased upon mitotic entry (PubMed:21195118). It regulates cytokinesis downstream of calcineurin, and does not affect clathrin-mediated endocytosis (PubMed:21195118). Dephosphorylated by calcineurin/PP2 during cytokinesis in a Ca(2+)- and calmodulin-dependent manner (By similarity). Phosphorylated on tyrosine residues by EGFR (By similarity). Phosphorylated on tyrosine residues after activation of SRC (PubMed:19995918).</text>
</comment>
<comment type="similarity">
    <text evidence="6">Belongs to the TRAFAC class dynamin-like GTPase superfamily. Dynamin/Fzo/YdjA family.</text>
</comment>
<protein>
    <recommendedName>
        <fullName evidence="22">Dynamin-2</fullName>
        <ecNumber evidence="13 17">3.6.5.5</ecNumber>
    </recommendedName>
</protein>
<dbReference type="EC" id="3.6.5.5" evidence="13 17"/>
<dbReference type="EMBL" id="L25605">
    <property type="protein sequence ID" value="AAA19736.1"/>
    <property type="molecule type" value="mRNA"/>
</dbReference>
<dbReference type="EMBL" id="L24562">
    <property type="protein sequence ID" value="AAA16746.1"/>
    <property type="molecule type" value="mRNA"/>
</dbReference>
<dbReference type="PIR" id="A36878">
    <property type="entry name" value="A36878"/>
</dbReference>
<dbReference type="PIR" id="A53165">
    <property type="entry name" value="A53165"/>
</dbReference>
<dbReference type="PIR" id="B53165">
    <property type="entry name" value="B53165"/>
</dbReference>
<dbReference type="RefSeq" id="NP_037331.1">
    <molecule id="P39052-1"/>
    <property type="nucleotide sequence ID" value="NM_013199.2"/>
</dbReference>
<dbReference type="RefSeq" id="XP_006242670.1">
    <molecule id="P39052-2"/>
    <property type="nucleotide sequence ID" value="XM_006242608.5"/>
</dbReference>
<dbReference type="RefSeq" id="XP_006242674.1">
    <molecule id="P39052-4"/>
    <property type="nucleotide sequence ID" value="XM_006242612.5"/>
</dbReference>
<dbReference type="RefSeq" id="XP_006242675.1">
    <molecule id="P39052-3"/>
    <property type="nucleotide sequence ID" value="XM_006242613.5"/>
</dbReference>
<dbReference type="BMRB" id="P39052"/>
<dbReference type="SMR" id="P39052"/>
<dbReference type="BioGRID" id="247779">
    <property type="interactions" value="6"/>
</dbReference>
<dbReference type="CORUM" id="P39052"/>
<dbReference type="DIP" id="DIP-33275N"/>
<dbReference type="FunCoup" id="P39052">
    <property type="interactions" value="3363"/>
</dbReference>
<dbReference type="IntAct" id="P39052">
    <property type="interactions" value="25"/>
</dbReference>
<dbReference type="MINT" id="P39052"/>
<dbReference type="STRING" id="10116.ENSRNOP00000010948"/>
<dbReference type="BindingDB" id="P39052"/>
<dbReference type="ChEMBL" id="CHEMBL2311233"/>
<dbReference type="GlyGen" id="P39052">
    <property type="glycosylation" value="2 sites"/>
</dbReference>
<dbReference type="iPTMnet" id="P39052"/>
<dbReference type="PhosphoSitePlus" id="P39052"/>
<dbReference type="jPOST" id="P39052"/>
<dbReference type="PaxDb" id="10116-ENSRNOP00000060296"/>
<dbReference type="GeneID" id="25751"/>
<dbReference type="KEGG" id="rno:25751"/>
<dbReference type="UCSC" id="RGD:2513">
    <molecule id="P39052-1"/>
    <property type="organism name" value="rat"/>
</dbReference>
<dbReference type="AGR" id="RGD:2513"/>
<dbReference type="CTD" id="1785"/>
<dbReference type="RGD" id="2513">
    <property type="gene designation" value="Dnm2"/>
</dbReference>
<dbReference type="VEuPathDB" id="HostDB:ENSRNOG00000007649"/>
<dbReference type="eggNOG" id="KOG0446">
    <property type="taxonomic scope" value="Eukaryota"/>
</dbReference>
<dbReference type="HOGENOM" id="CLU_008964_5_0_1"/>
<dbReference type="InParanoid" id="P39052"/>
<dbReference type="PhylomeDB" id="P39052"/>
<dbReference type="TreeFam" id="TF300362"/>
<dbReference type="BRENDA" id="3.6.5.5">
    <property type="organism ID" value="5301"/>
</dbReference>
<dbReference type="Reactome" id="R-RNO-166016">
    <property type="pathway name" value="Toll Like Receptor 4 (TLR4) Cascade"/>
</dbReference>
<dbReference type="Reactome" id="R-RNO-190873">
    <property type="pathway name" value="Gap junction degradation"/>
</dbReference>
<dbReference type="Reactome" id="R-RNO-196025">
    <property type="pathway name" value="Formation of annular gap junctions"/>
</dbReference>
<dbReference type="Reactome" id="R-RNO-203641">
    <property type="pathway name" value="NOSTRIN mediated eNOS trafficking"/>
</dbReference>
<dbReference type="Reactome" id="R-RNO-2132295">
    <property type="pathway name" value="MHC class II antigen presentation"/>
</dbReference>
<dbReference type="Reactome" id="R-RNO-432720">
    <property type="pathway name" value="Lysosome Vesicle Biogenesis"/>
</dbReference>
<dbReference type="Reactome" id="R-RNO-432722">
    <property type="pathway name" value="Golgi Associated Vesicle Biogenesis"/>
</dbReference>
<dbReference type="Reactome" id="R-RNO-437239">
    <property type="pathway name" value="Recycling pathway of L1"/>
</dbReference>
<dbReference type="Reactome" id="R-RNO-8856828">
    <property type="pathway name" value="Clathrin-mediated endocytosis"/>
</dbReference>
<dbReference type="PRO" id="PR:P39052"/>
<dbReference type="Proteomes" id="UP000002494">
    <property type="component" value="Chromosome 8"/>
</dbReference>
<dbReference type="Bgee" id="ENSRNOG00000007649">
    <property type="expression patterns" value="Expressed in jejunum and 19 other cell types or tissues"/>
</dbReference>
<dbReference type="ExpressionAtlas" id="P39052">
    <property type="expression patterns" value="baseline and differential"/>
</dbReference>
<dbReference type="GO" id="GO:0070161">
    <property type="term" value="C:anchoring junction"/>
    <property type="evidence" value="ECO:0007669"/>
    <property type="project" value="UniProtKB-SubCell"/>
</dbReference>
<dbReference type="GO" id="GO:0005938">
    <property type="term" value="C:cell cortex"/>
    <property type="evidence" value="ECO:0000266"/>
    <property type="project" value="RGD"/>
</dbReference>
<dbReference type="GO" id="GO:0030054">
    <property type="term" value="C:cell junction"/>
    <property type="evidence" value="ECO:0000314"/>
    <property type="project" value="UniProtKB"/>
</dbReference>
<dbReference type="GO" id="GO:0005814">
    <property type="term" value="C:centriole"/>
    <property type="evidence" value="ECO:0000250"/>
    <property type="project" value="UniProtKB"/>
</dbReference>
<dbReference type="GO" id="GO:0005813">
    <property type="term" value="C:centrosome"/>
    <property type="evidence" value="ECO:0000314"/>
    <property type="project" value="UniProtKB"/>
</dbReference>
<dbReference type="GO" id="GO:0045334">
    <property type="term" value="C:clathrin-coated endocytic vesicle"/>
    <property type="evidence" value="ECO:0000314"/>
    <property type="project" value="RGD"/>
</dbReference>
<dbReference type="GO" id="GO:0005905">
    <property type="term" value="C:clathrin-coated pit"/>
    <property type="evidence" value="ECO:0000314"/>
    <property type="project" value="UniProtKB"/>
</dbReference>
<dbReference type="GO" id="GO:0030136">
    <property type="term" value="C:clathrin-coated vesicle"/>
    <property type="evidence" value="ECO:0000314"/>
    <property type="project" value="UniProtKB"/>
</dbReference>
<dbReference type="GO" id="GO:0005737">
    <property type="term" value="C:cytoplasm"/>
    <property type="evidence" value="ECO:0000318"/>
    <property type="project" value="GO_Central"/>
</dbReference>
<dbReference type="GO" id="GO:0005829">
    <property type="term" value="C:cytosol"/>
    <property type="evidence" value="ECO:0000266"/>
    <property type="project" value="RGD"/>
</dbReference>
<dbReference type="GO" id="GO:0005768">
    <property type="term" value="C:endosome"/>
    <property type="evidence" value="ECO:0000314"/>
    <property type="project" value="RGD"/>
</dbReference>
<dbReference type="GO" id="GO:0098978">
    <property type="term" value="C:glutamatergic synapse"/>
    <property type="evidence" value="ECO:0000314"/>
    <property type="project" value="SynGO"/>
</dbReference>
<dbReference type="GO" id="GO:0000139">
    <property type="term" value="C:Golgi membrane"/>
    <property type="evidence" value="ECO:0000314"/>
    <property type="project" value="RGD"/>
</dbReference>
<dbReference type="GO" id="GO:0030027">
    <property type="term" value="C:lamellipodium"/>
    <property type="evidence" value="ECO:0000314"/>
    <property type="project" value="RGD"/>
</dbReference>
<dbReference type="GO" id="GO:0072687">
    <property type="term" value="C:meiotic spindle"/>
    <property type="evidence" value="ECO:0000266"/>
    <property type="project" value="RGD"/>
</dbReference>
<dbReference type="GO" id="GO:0005874">
    <property type="term" value="C:microtubule"/>
    <property type="evidence" value="ECO:0000250"/>
    <property type="project" value="UniProtKB"/>
</dbReference>
<dbReference type="GO" id="GO:0030496">
    <property type="term" value="C:midbody"/>
    <property type="evidence" value="ECO:0007669"/>
    <property type="project" value="UniProtKB-SubCell"/>
</dbReference>
<dbReference type="GO" id="GO:0043005">
    <property type="term" value="C:neuron projection"/>
    <property type="evidence" value="ECO:0000314"/>
    <property type="project" value="UniProtKB"/>
</dbReference>
<dbReference type="GO" id="GO:0048471">
    <property type="term" value="C:perinuclear region of cytoplasm"/>
    <property type="evidence" value="ECO:0000314"/>
    <property type="project" value="RGD"/>
</dbReference>
<dbReference type="GO" id="GO:0001891">
    <property type="term" value="C:phagocytic cup"/>
    <property type="evidence" value="ECO:0000314"/>
    <property type="project" value="RGD"/>
</dbReference>
<dbReference type="GO" id="GO:0030670">
    <property type="term" value="C:phagocytic vesicle membrane"/>
    <property type="evidence" value="ECO:0007669"/>
    <property type="project" value="UniProtKB-SubCell"/>
</dbReference>
<dbReference type="GO" id="GO:0001917">
    <property type="term" value="C:photoreceptor inner segment"/>
    <property type="evidence" value="ECO:0000266"/>
    <property type="project" value="RGD"/>
</dbReference>
<dbReference type="GO" id="GO:0005886">
    <property type="term" value="C:plasma membrane"/>
    <property type="evidence" value="ECO:0000318"/>
    <property type="project" value="GO_Central"/>
</dbReference>
<dbReference type="GO" id="GO:0002102">
    <property type="term" value="C:podosome"/>
    <property type="evidence" value="ECO:0007669"/>
    <property type="project" value="UniProtKB-SubCell"/>
</dbReference>
<dbReference type="GO" id="GO:0014069">
    <property type="term" value="C:postsynaptic density"/>
    <property type="evidence" value="ECO:0000314"/>
    <property type="project" value="UniProtKB"/>
</dbReference>
<dbReference type="GO" id="GO:0099092">
    <property type="term" value="C:postsynaptic density, intracellular component"/>
    <property type="evidence" value="ECO:0000314"/>
    <property type="project" value="SynGO"/>
</dbReference>
<dbReference type="GO" id="GO:0098843">
    <property type="term" value="C:postsynaptic endocytic zone"/>
    <property type="evidence" value="ECO:0000314"/>
    <property type="project" value="SynGO"/>
</dbReference>
<dbReference type="GO" id="GO:0045211">
    <property type="term" value="C:postsynaptic membrane"/>
    <property type="evidence" value="ECO:0000250"/>
    <property type="project" value="UniProtKB"/>
</dbReference>
<dbReference type="GO" id="GO:0098793">
    <property type="term" value="C:presynapse"/>
    <property type="evidence" value="ECO:0007669"/>
    <property type="project" value="GOC"/>
</dbReference>
<dbReference type="GO" id="GO:0032991">
    <property type="term" value="C:protein-containing complex"/>
    <property type="evidence" value="ECO:0000314"/>
    <property type="project" value="RGD"/>
</dbReference>
<dbReference type="GO" id="GO:0055037">
    <property type="term" value="C:recycling endosome"/>
    <property type="evidence" value="ECO:0000250"/>
    <property type="project" value="UniProtKB"/>
</dbReference>
<dbReference type="GO" id="GO:0032587">
    <property type="term" value="C:ruffle membrane"/>
    <property type="evidence" value="ECO:0000314"/>
    <property type="project" value="RGD"/>
</dbReference>
<dbReference type="GO" id="GO:0045202">
    <property type="term" value="C:synapse"/>
    <property type="evidence" value="ECO:0000318"/>
    <property type="project" value="GO_Central"/>
</dbReference>
<dbReference type="GO" id="GO:0005802">
    <property type="term" value="C:trans-Golgi network"/>
    <property type="evidence" value="ECO:0000314"/>
    <property type="project" value="RGD"/>
</dbReference>
<dbReference type="GO" id="GO:0001931">
    <property type="term" value="C:uropod"/>
    <property type="evidence" value="ECO:0000250"/>
    <property type="project" value="UniProtKB"/>
</dbReference>
<dbReference type="GO" id="GO:0031749">
    <property type="term" value="F:D2 dopamine receptor binding"/>
    <property type="evidence" value="ECO:0000353"/>
    <property type="project" value="RGD"/>
</dbReference>
<dbReference type="GO" id="GO:0005525">
    <property type="term" value="F:GTP binding"/>
    <property type="evidence" value="ECO:0000304"/>
    <property type="project" value="RGD"/>
</dbReference>
<dbReference type="GO" id="GO:0003924">
    <property type="term" value="F:GTPase activity"/>
    <property type="evidence" value="ECO:0000314"/>
    <property type="project" value="UniProtKB"/>
</dbReference>
<dbReference type="GO" id="GO:0008017">
    <property type="term" value="F:microtubule binding"/>
    <property type="evidence" value="ECO:0000318"/>
    <property type="project" value="GO_Central"/>
</dbReference>
<dbReference type="GO" id="GO:0050998">
    <property type="term" value="F:nitric-oxide synthase binding"/>
    <property type="evidence" value="ECO:0000314"/>
    <property type="project" value="RGD"/>
</dbReference>
<dbReference type="GO" id="GO:0036312">
    <property type="term" value="F:phosphatidylinositol 3-kinase regulatory subunit binding"/>
    <property type="evidence" value="ECO:0000314"/>
    <property type="project" value="RGD"/>
</dbReference>
<dbReference type="GO" id="GO:0005546">
    <property type="term" value="F:phosphatidylinositol-4,5-bisphosphate binding"/>
    <property type="evidence" value="ECO:0000250"/>
    <property type="project" value="UniProtKB"/>
</dbReference>
<dbReference type="GO" id="GO:0019901">
    <property type="term" value="F:protein kinase binding"/>
    <property type="evidence" value="ECO:0000353"/>
    <property type="project" value="RGD"/>
</dbReference>
<dbReference type="GO" id="GO:0120283">
    <property type="term" value="F:protein serine/threonine kinase binding"/>
    <property type="evidence" value="ECO:0000353"/>
    <property type="project" value="RGD"/>
</dbReference>
<dbReference type="GO" id="GO:0044877">
    <property type="term" value="F:protein-containing complex binding"/>
    <property type="evidence" value="ECO:0000314"/>
    <property type="project" value="RGD"/>
</dbReference>
<dbReference type="GO" id="GO:0017124">
    <property type="term" value="F:SH3 domain binding"/>
    <property type="evidence" value="ECO:0000353"/>
    <property type="project" value="RGD"/>
</dbReference>
<dbReference type="GO" id="GO:0050699">
    <property type="term" value="F:WW domain binding"/>
    <property type="evidence" value="ECO:0000353"/>
    <property type="project" value="RGD"/>
</dbReference>
<dbReference type="GO" id="GO:0061572">
    <property type="term" value="P:actin filament bundle organization"/>
    <property type="evidence" value="ECO:0000315"/>
    <property type="project" value="UniProtKB"/>
</dbReference>
<dbReference type="GO" id="GO:0035904">
    <property type="term" value="P:aorta development"/>
    <property type="evidence" value="ECO:0000266"/>
    <property type="project" value="RGD"/>
</dbReference>
<dbReference type="GO" id="GO:0006914">
    <property type="term" value="P:autophagy"/>
    <property type="evidence" value="ECO:0000250"/>
    <property type="project" value="UniProtKB"/>
</dbReference>
<dbReference type="GO" id="GO:0071245">
    <property type="term" value="P:cellular response to carbon monoxide"/>
    <property type="evidence" value="ECO:0000270"/>
    <property type="project" value="RGD"/>
</dbReference>
<dbReference type="GO" id="GO:1903351">
    <property type="term" value="P:cellular response to dopamine"/>
    <property type="evidence" value="ECO:0000314"/>
    <property type="project" value="RGD"/>
</dbReference>
<dbReference type="GO" id="GO:0071732">
    <property type="term" value="P:cellular response to nitric oxide"/>
    <property type="evidence" value="ECO:0000270"/>
    <property type="project" value="RGD"/>
</dbReference>
<dbReference type="GO" id="GO:0071481">
    <property type="term" value="P:cellular response to X-ray"/>
    <property type="evidence" value="ECO:0000270"/>
    <property type="project" value="RGD"/>
</dbReference>
<dbReference type="GO" id="GO:0007098">
    <property type="term" value="P:centrosome cycle"/>
    <property type="evidence" value="ECO:0000315"/>
    <property type="project" value="UniProtKB"/>
</dbReference>
<dbReference type="GO" id="GO:0060976">
    <property type="term" value="P:coronary vasculature development"/>
    <property type="evidence" value="ECO:0000266"/>
    <property type="project" value="RGD"/>
</dbReference>
<dbReference type="GO" id="GO:0006897">
    <property type="term" value="P:endocytosis"/>
    <property type="evidence" value="ECO:0000266"/>
    <property type="project" value="RGD"/>
</dbReference>
<dbReference type="GO" id="GO:0002031">
    <property type="term" value="P:G protein-coupled receptor internalization"/>
    <property type="evidence" value="ECO:0000315"/>
    <property type="project" value="RGD"/>
</dbReference>
<dbReference type="GO" id="GO:0006893">
    <property type="term" value="P:Golgi to plasma membrane transport"/>
    <property type="evidence" value="ECO:0000315"/>
    <property type="project" value="RGD"/>
</dbReference>
<dbReference type="GO" id="GO:0044351">
    <property type="term" value="P:macropinocytosis"/>
    <property type="evidence" value="ECO:0000315"/>
    <property type="project" value="RGD"/>
</dbReference>
<dbReference type="GO" id="GO:0097749">
    <property type="term" value="P:membrane tubulation"/>
    <property type="evidence" value="ECO:0000315"/>
    <property type="project" value="UniProtKB"/>
</dbReference>
<dbReference type="GO" id="GO:1903526">
    <property type="term" value="P:negative regulation of membrane tubulation"/>
    <property type="evidence" value="ECO:0000266"/>
    <property type="project" value="RGD"/>
</dbReference>
<dbReference type="GO" id="GO:1902856">
    <property type="term" value="P:negative regulation of non-motile cilium assembly"/>
    <property type="evidence" value="ECO:0000315"/>
    <property type="project" value="RGD"/>
</dbReference>
<dbReference type="GO" id="GO:0030512">
    <property type="term" value="P:negative regulation of transforming growth factor beta receptor signaling pathway"/>
    <property type="evidence" value="ECO:0000315"/>
    <property type="project" value="RGD"/>
</dbReference>
<dbReference type="GO" id="GO:0048812">
    <property type="term" value="P:neuron projection morphogenesis"/>
    <property type="evidence" value="ECO:0000315"/>
    <property type="project" value="UniProtKB"/>
</dbReference>
<dbReference type="GO" id="GO:0006909">
    <property type="term" value="P:phagocytosis"/>
    <property type="evidence" value="ECO:0007669"/>
    <property type="project" value="UniProtKB-KW"/>
</dbReference>
<dbReference type="GO" id="GO:2000370">
    <property type="term" value="P:positive regulation of clathrin-dependent endocytosis"/>
    <property type="evidence" value="ECO:0000315"/>
    <property type="project" value="RGD"/>
</dbReference>
<dbReference type="GO" id="GO:0045807">
    <property type="term" value="P:positive regulation of endocytosis"/>
    <property type="evidence" value="ECO:0000315"/>
    <property type="project" value="RGD"/>
</dbReference>
<dbReference type="GO" id="GO:0010592">
    <property type="term" value="P:positive regulation of lamellipodium assembly"/>
    <property type="evidence" value="ECO:0000315"/>
    <property type="project" value="RGD"/>
</dbReference>
<dbReference type="GO" id="GO:0045429">
    <property type="term" value="P:positive regulation of nitric oxide biosynthetic process"/>
    <property type="evidence" value="ECO:0000315"/>
    <property type="project" value="RGD"/>
</dbReference>
<dbReference type="GO" id="GO:0050766">
    <property type="term" value="P:positive regulation of phagocytosis"/>
    <property type="evidence" value="ECO:0000315"/>
    <property type="project" value="RGD"/>
</dbReference>
<dbReference type="GO" id="GO:1900026">
    <property type="term" value="P:positive regulation of substrate adhesion-dependent cell spreading"/>
    <property type="evidence" value="ECO:0000315"/>
    <property type="project" value="RGD"/>
</dbReference>
<dbReference type="GO" id="GO:0140239">
    <property type="term" value="P:postsynaptic endocytosis"/>
    <property type="evidence" value="ECO:0000314"/>
    <property type="project" value="SynGO"/>
</dbReference>
<dbReference type="GO" id="GO:0051258">
    <property type="term" value="P:protein polymerization"/>
    <property type="evidence" value="ECO:0000315"/>
    <property type="project" value="UniProtKB"/>
</dbReference>
<dbReference type="GO" id="GO:0031623">
    <property type="term" value="P:receptor internalization"/>
    <property type="evidence" value="ECO:0000266"/>
    <property type="project" value="RGD"/>
</dbReference>
<dbReference type="GO" id="GO:0006898">
    <property type="term" value="P:receptor-mediated endocytosis"/>
    <property type="evidence" value="ECO:0000314"/>
    <property type="project" value="RGD"/>
</dbReference>
<dbReference type="GO" id="GO:0030516">
    <property type="term" value="P:regulation of axon extension"/>
    <property type="evidence" value="ECO:0000315"/>
    <property type="project" value="UniProtKB"/>
</dbReference>
<dbReference type="GO" id="GO:1903358">
    <property type="term" value="P:regulation of Golgi organization"/>
    <property type="evidence" value="ECO:0000315"/>
    <property type="project" value="RGD"/>
</dbReference>
<dbReference type="GO" id="GO:0035020">
    <property type="term" value="P:regulation of Rac protein signal transduction"/>
    <property type="evidence" value="ECO:0000315"/>
    <property type="project" value="RGD"/>
</dbReference>
<dbReference type="GO" id="GO:0042220">
    <property type="term" value="P:response to cocaine"/>
    <property type="evidence" value="ECO:0000270"/>
    <property type="project" value="RGD"/>
</dbReference>
<dbReference type="GO" id="GO:0009416">
    <property type="term" value="P:response to light stimulus"/>
    <property type="evidence" value="ECO:0000270"/>
    <property type="project" value="RGD"/>
</dbReference>
<dbReference type="GO" id="GO:0007283">
    <property type="term" value="P:spermatogenesis"/>
    <property type="evidence" value="ECO:0000270"/>
    <property type="project" value="RGD"/>
</dbReference>
<dbReference type="GO" id="GO:0043149">
    <property type="term" value="P:stress fiber assembly"/>
    <property type="evidence" value="ECO:0000315"/>
    <property type="project" value="UniProtKB"/>
</dbReference>
<dbReference type="GO" id="GO:0016185">
    <property type="term" value="P:synaptic vesicle budding from presynaptic endocytic zone membrane"/>
    <property type="evidence" value="ECO:0000318"/>
    <property type="project" value="GO_Central"/>
</dbReference>
<dbReference type="GO" id="GO:0048488">
    <property type="term" value="P:synaptic vesicle endocytosis"/>
    <property type="evidence" value="ECO:0000266"/>
    <property type="project" value="RGD"/>
</dbReference>
<dbReference type="GO" id="GO:0033572">
    <property type="term" value="P:transferrin transport"/>
    <property type="evidence" value="ECO:0000266"/>
    <property type="project" value="RGD"/>
</dbReference>
<dbReference type="GO" id="GO:0003281">
    <property type="term" value="P:ventricular septum development"/>
    <property type="evidence" value="ECO:0000266"/>
    <property type="project" value="RGD"/>
</dbReference>
<dbReference type="GO" id="GO:0099050">
    <property type="term" value="P:vesicle scission"/>
    <property type="evidence" value="ECO:0000250"/>
    <property type="project" value="UniProtKB"/>
</dbReference>
<dbReference type="CDD" id="cd08771">
    <property type="entry name" value="DLP_1"/>
    <property type="match status" value="1"/>
</dbReference>
<dbReference type="CDD" id="cd01256">
    <property type="entry name" value="PH_dynamin"/>
    <property type="match status" value="1"/>
</dbReference>
<dbReference type="FunFam" id="1.20.120.1240:FF:000019">
    <property type="entry name" value="Dynamin 2"/>
    <property type="match status" value="1"/>
</dbReference>
<dbReference type="FunFam" id="1.20.120.1240:FF:000014">
    <property type="entry name" value="Dynamin 2b"/>
    <property type="match status" value="1"/>
</dbReference>
<dbReference type="FunFam" id="2.30.29.30:FF:000010">
    <property type="entry name" value="dynamin-1 isoform X2"/>
    <property type="match status" value="1"/>
</dbReference>
<dbReference type="FunFam" id="3.40.50.300:FF:000045">
    <property type="entry name" value="dynamin-1 isoform X2"/>
    <property type="match status" value="1"/>
</dbReference>
<dbReference type="Gene3D" id="1.20.120.1240">
    <property type="entry name" value="Dynamin, middle domain"/>
    <property type="match status" value="1"/>
</dbReference>
<dbReference type="Gene3D" id="3.40.50.300">
    <property type="entry name" value="P-loop containing nucleotide triphosphate hydrolases"/>
    <property type="match status" value="1"/>
</dbReference>
<dbReference type="Gene3D" id="2.30.29.30">
    <property type="entry name" value="Pleckstrin-homology domain (PH domain)/Phosphotyrosine-binding domain (PTB)"/>
    <property type="match status" value="1"/>
</dbReference>
<dbReference type="InterPro" id="IPR022812">
    <property type="entry name" value="Dynamin"/>
</dbReference>
<dbReference type="InterPro" id="IPR001401">
    <property type="entry name" value="Dynamin_GTPase"/>
</dbReference>
<dbReference type="InterPro" id="IPR019762">
    <property type="entry name" value="Dynamin_GTPase_CS"/>
</dbReference>
<dbReference type="InterPro" id="IPR045063">
    <property type="entry name" value="Dynamin_N"/>
</dbReference>
<dbReference type="InterPro" id="IPR000375">
    <property type="entry name" value="Dynamin_stalk"/>
</dbReference>
<dbReference type="InterPro" id="IPR030381">
    <property type="entry name" value="G_DYNAMIN_dom"/>
</dbReference>
<dbReference type="InterPro" id="IPR003130">
    <property type="entry name" value="GED"/>
</dbReference>
<dbReference type="InterPro" id="IPR020850">
    <property type="entry name" value="GED_dom"/>
</dbReference>
<dbReference type="InterPro" id="IPR027417">
    <property type="entry name" value="P-loop_NTPase"/>
</dbReference>
<dbReference type="InterPro" id="IPR011993">
    <property type="entry name" value="PH-like_dom_sf"/>
</dbReference>
<dbReference type="InterPro" id="IPR001849">
    <property type="entry name" value="PH_domain"/>
</dbReference>
<dbReference type="PANTHER" id="PTHR11566">
    <property type="entry name" value="DYNAMIN"/>
    <property type="match status" value="1"/>
</dbReference>
<dbReference type="PANTHER" id="PTHR11566:SF23">
    <property type="entry name" value="DYNAMIN-2"/>
    <property type="match status" value="1"/>
</dbReference>
<dbReference type="Pfam" id="PF01031">
    <property type="entry name" value="Dynamin_M"/>
    <property type="match status" value="1"/>
</dbReference>
<dbReference type="Pfam" id="PF00350">
    <property type="entry name" value="Dynamin_N"/>
    <property type="match status" value="1"/>
</dbReference>
<dbReference type="Pfam" id="PF02212">
    <property type="entry name" value="GED"/>
    <property type="match status" value="1"/>
</dbReference>
<dbReference type="Pfam" id="PF00169">
    <property type="entry name" value="PH"/>
    <property type="match status" value="1"/>
</dbReference>
<dbReference type="PRINTS" id="PR00195">
    <property type="entry name" value="DYNAMIN"/>
</dbReference>
<dbReference type="SMART" id="SM00053">
    <property type="entry name" value="DYNc"/>
    <property type="match status" value="1"/>
</dbReference>
<dbReference type="SMART" id="SM00302">
    <property type="entry name" value="GED"/>
    <property type="match status" value="1"/>
</dbReference>
<dbReference type="SMART" id="SM00233">
    <property type="entry name" value="PH"/>
    <property type="match status" value="1"/>
</dbReference>
<dbReference type="SUPFAM" id="SSF52540">
    <property type="entry name" value="P-loop containing nucleoside triphosphate hydrolases"/>
    <property type="match status" value="1"/>
</dbReference>
<dbReference type="SUPFAM" id="SSF50729">
    <property type="entry name" value="PH domain-like"/>
    <property type="match status" value="1"/>
</dbReference>
<dbReference type="PROSITE" id="PS00410">
    <property type="entry name" value="G_DYNAMIN_1"/>
    <property type="match status" value="1"/>
</dbReference>
<dbReference type="PROSITE" id="PS51718">
    <property type="entry name" value="G_DYNAMIN_2"/>
    <property type="match status" value="1"/>
</dbReference>
<dbReference type="PROSITE" id="PS51388">
    <property type="entry name" value="GED"/>
    <property type="match status" value="1"/>
</dbReference>
<dbReference type="PROSITE" id="PS50003">
    <property type="entry name" value="PH_DOMAIN"/>
    <property type="match status" value="1"/>
</dbReference>
<accession>P39052</accession>
<evidence type="ECO:0000250" key="1">
    <source>
        <dbReference type="UniProtKB" id="P39054"/>
    </source>
</evidence>
<evidence type="ECO:0000250" key="2">
    <source>
        <dbReference type="UniProtKB" id="P50570"/>
    </source>
</evidence>
<evidence type="ECO:0000250" key="3">
    <source>
        <dbReference type="UniProtKB" id="Q05193"/>
    </source>
</evidence>
<evidence type="ECO:0000255" key="4">
    <source>
        <dbReference type="PROSITE-ProRule" id="PRU00145"/>
    </source>
</evidence>
<evidence type="ECO:0000255" key="5">
    <source>
        <dbReference type="PROSITE-ProRule" id="PRU00720"/>
    </source>
</evidence>
<evidence type="ECO:0000255" key="6">
    <source>
        <dbReference type="PROSITE-ProRule" id="PRU01055"/>
    </source>
</evidence>
<evidence type="ECO:0000256" key="7">
    <source>
        <dbReference type="SAM" id="MobiDB-lite"/>
    </source>
</evidence>
<evidence type="ECO:0000269" key="8">
    <source>
    </source>
</evidence>
<evidence type="ECO:0000269" key="9">
    <source>
    </source>
</evidence>
<evidence type="ECO:0000269" key="10">
    <source>
    </source>
</evidence>
<evidence type="ECO:0000269" key="11">
    <source>
    </source>
</evidence>
<evidence type="ECO:0000269" key="12">
    <source>
    </source>
</evidence>
<evidence type="ECO:0000269" key="13">
    <source>
    </source>
</evidence>
<evidence type="ECO:0000269" key="14">
    <source>
    </source>
</evidence>
<evidence type="ECO:0000269" key="15">
    <source>
    </source>
</evidence>
<evidence type="ECO:0000269" key="16">
    <source>
    </source>
</evidence>
<evidence type="ECO:0000269" key="17">
    <source>
    </source>
</evidence>
<evidence type="ECO:0000269" key="18">
    <source>
    </source>
</evidence>
<evidence type="ECO:0000269" key="19">
    <source>
    </source>
</evidence>
<evidence type="ECO:0000303" key="20">
    <source>
    </source>
</evidence>
<evidence type="ECO:0000303" key="21">
    <source>
    </source>
</evidence>
<evidence type="ECO:0000305" key="22"/>
<evidence type="ECO:0000305" key="23">
    <source>
    </source>
</evidence>
<evidence type="ECO:0000312" key="24">
    <source>
        <dbReference type="RGD" id="2513"/>
    </source>
</evidence>
<gene>
    <name evidence="24" type="primary">Dnm2</name>
    <name type="synonym">Dyn2</name>
</gene>